<sequence>MNFNINILGTGGTRPLHNRYLTSVLIEYHGESFLFDCGEATQMSLRKQKISWQKIKVICITHLHADHITGLLGIVMLMAQSGDTRKEPLTIIGPIGIKKYLDANIELLRVHKNYDIIYKEIIINKTEPILYEDKKKRIEYIKLKHSIECVGYLFIEKDKPGKFNTQKAESLNIPKGPIRKTLQEGHEVILNGKKILPSEILGESQKGLKFAYITDTAYFEELSTHIKNFNLVIIESTFKNDLKDEAKKKLHLTAKLAAKITKKANVYQTGLIHFSERYTLNKDLCELLDEAQQEYPNGEIFLTKDGMRLKANKDKFIIK</sequence>
<feature type="chain" id="PRO_1000187939" description="Ribonuclease Z">
    <location>
        <begin position="1"/>
        <end position="319"/>
    </location>
</feature>
<feature type="active site" description="Proton acceptor" evidence="1">
    <location>
        <position position="66"/>
    </location>
</feature>
<feature type="binding site" evidence="1">
    <location>
        <position position="62"/>
    </location>
    <ligand>
        <name>Zn(2+)</name>
        <dbReference type="ChEBI" id="CHEBI:29105"/>
        <label>1</label>
        <note>catalytic</note>
    </ligand>
</feature>
<feature type="binding site" evidence="1">
    <location>
        <position position="64"/>
    </location>
    <ligand>
        <name>Zn(2+)</name>
        <dbReference type="ChEBI" id="CHEBI:29105"/>
        <label>1</label>
        <note>catalytic</note>
    </ligand>
</feature>
<feature type="binding site" evidence="1">
    <location>
        <position position="66"/>
    </location>
    <ligand>
        <name>Zn(2+)</name>
        <dbReference type="ChEBI" id="CHEBI:29105"/>
        <label>2</label>
        <note>catalytic</note>
    </ligand>
</feature>
<feature type="binding site" evidence="1">
    <location>
        <position position="67"/>
    </location>
    <ligand>
        <name>Zn(2+)</name>
        <dbReference type="ChEBI" id="CHEBI:29105"/>
        <label>2</label>
        <note>catalytic</note>
    </ligand>
</feature>
<feature type="binding site" evidence="1">
    <location>
        <position position="145"/>
    </location>
    <ligand>
        <name>Zn(2+)</name>
        <dbReference type="ChEBI" id="CHEBI:29105"/>
        <label>1</label>
        <note>catalytic</note>
    </ligand>
</feature>
<feature type="binding site" evidence="1">
    <location>
        <position position="215"/>
    </location>
    <ligand>
        <name>Zn(2+)</name>
        <dbReference type="ChEBI" id="CHEBI:29105"/>
        <label>1</label>
        <note>catalytic</note>
    </ligand>
</feature>
<feature type="binding site" evidence="1">
    <location>
        <position position="215"/>
    </location>
    <ligand>
        <name>Zn(2+)</name>
        <dbReference type="ChEBI" id="CHEBI:29105"/>
        <label>2</label>
        <note>catalytic</note>
    </ligand>
</feature>
<feature type="binding site" evidence="1">
    <location>
        <position position="273"/>
    </location>
    <ligand>
        <name>Zn(2+)</name>
        <dbReference type="ChEBI" id="CHEBI:29105"/>
        <label>2</label>
        <note>catalytic</note>
    </ligand>
</feature>
<keyword id="KW-0255">Endonuclease</keyword>
<keyword id="KW-0378">Hydrolase</keyword>
<keyword id="KW-0479">Metal-binding</keyword>
<keyword id="KW-0540">Nuclease</keyword>
<keyword id="KW-0819">tRNA processing</keyword>
<keyword id="KW-0862">Zinc</keyword>
<reference key="1">
    <citation type="submission" date="2004-12" db="EMBL/GenBank/DDBJ databases">
        <title>The genome sequence of Borrelia hermsii and Borrelia turicatae: comparative analysis of two agents of endemic N. America relapsing fever.</title>
        <authorList>
            <person name="Porcella S.F."/>
            <person name="Raffel S.J."/>
            <person name="Schrumpf M.E."/>
            <person name="Montgomery B."/>
            <person name="Smith T."/>
            <person name="Schwan T.G."/>
        </authorList>
    </citation>
    <scope>NUCLEOTIDE SEQUENCE [LARGE SCALE GENOMIC DNA]</scope>
    <source>
        <strain>HS1 / DAH</strain>
    </source>
</reference>
<dbReference type="EC" id="3.1.26.11" evidence="1"/>
<dbReference type="EMBL" id="CP000048">
    <property type="protein sequence ID" value="AAX17253.1"/>
    <property type="molecule type" value="Genomic_DNA"/>
</dbReference>
<dbReference type="RefSeq" id="WP_012422503.1">
    <property type="nucleotide sequence ID" value="NZ_CP073136.1"/>
</dbReference>
<dbReference type="SMR" id="B2S197"/>
<dbReference type="KEGG" id="bhr:BH0755"/>
<dbReference type="HOGENOM" id="CLU_031317_2_1_12"/>
<dbReference type="Proteomes" id="UP000008834">
    <property type="component" value="Chromosome"/>
</dbReference>
<dbReference type="GO" id="GO:0042781">
    <property type="term" value="F:3'-tRNA processing endoribonuclease activity"/>
    <property type="evidence" value="ECO:0007669"/>
    <property type="project" value="UniProtKB-UniRule"/>
</dbReference>
<dbReference type="GO" id="GO:0008270">
    <property type="term" value="F:zinc ion binding"/>
    <property type="evidence" value="ECO:0007669"/>
    <property type="project" value="UniProtKB-UniRule"/>
</dbReference>
<dbReference type="CDD" id="cd07717">
    <property type="entry name" value="RNaseZ_ZiPD-like_MBL-fold"/>
    <property type="match status" value="1"/>
</dbReference>
<dbReference type="Gene3D" id="3.60.15.10">
    <property type="entry name" value="Ribonuclease Z/Hydroxyacylglutathione hydrolase-like"/>
    <property type="match status" value="1"/>
</dbReference>
<dbReference type="HAMAP" id="MF_01818">
    <property type="entry name" value="RNase_Z_BN"/>
    <property type="match status" value="1"/>
</dbReference>
<dbReference type="InterPro" id="IPR001279">
    <property type="entry name" value="Metallo-B-lactamas"/>
</dbReference>
<dbReference type="InterPro" id="IPR036866">
    <property type="entry name" value="RibonucZ/Hydroxyglut_hydro"/>
</dbReference>
<dbReference type="InterPro" id="IPR013471">
    <property type="entry name" value="RNase_Z/BN"/>
</dbReference>
<dbReference type="NCBIfam" id="NF000801">
    <property type="entry name" value="PRK00055.1-3"/>
    <property type="match status" value="1"/>
</dbReference>
<dbReference type="NCBIfam" id="TIGR02651">
    <property type="entry name" value="RNase_Z"/>
    <property type="match status" value="1"/>
</dbReference>
<dbReference type="PANTHER" id="PTHR46018">
    <property type="entry name" value="ZINC PHOSPHODIESTERASE ELAC PROTEIN 1"/>
    <property type="match status" value="1"/>
</dbReference>
<dbReference type="PANTHER" id="PTHR46018:SF2">
    <property type="entry name" value="ZINC PHOSPHODIESTERASE ELAC PROTEIN 1"/>
    <property type="match status" value="1"/>
</dbReference>
<dbReference type="Pfam" id="PF00753">
    <property type="entry name" value="Lactamase_B"/>
    <property type="match status" value="1"/>
</dbReference>
<dbReference type="Pfam" id="PF12706">
    <property type="entry name" value="Lactamase_B_2"/>
    <property type="match status" value="1"/>
</dbReference>
<dbReference type="SUPFAM" id="SSF56281">
    <property type="entry name" value="Metallo-hydrolase/oxidoreductase"/>
    <property type="match status" value="1"/>
</dbReference>
<name>RNZ_BORHD</name>
<accession>B2S197</accession>
<evidence type="ECO:0000255" key="1">
    <source>
        <dbReference type="HAMAP-Rule" id="MF_01818"/>
    </source>
</evidence>
<gene>
    <name evidence="1" type="primary">rnz</name>
    <name type="ordered locus">BH0755</name>
</gene>
<organism>
    <name type="scientific">Borrelia hermsii (strain HS1 / DAH)</name>
    <dbReference type="NCBI Taxonomy" id="314723"/>
    <lineage>
        <taxon>Bacteria</taxon>
        <taxon>Pseudomonadati</taxon>
        <taxon>Spirochaetota</taxon>
        <taxon>Spirochaetia</taxon>
        <taxon>Spirochaetales</taxon>
        <taxon>Borreliaceae</taxon>
        <taxon>Borrelia</taxon>
    </lineage>
</organism>
<proteinExistence type="inferred from homology"/>
<protein>
    <recommendedName>
        <fullName evidence="1">Ribonuclease Z</fullName>
        <shortName evidence="1">RNase Z</shortName>
        <ecNumber evidence="1">3.1.26.11</ecNumber>
    </recommendedName>
    <alternativeName>
        <fullName evidence="1">tRNA 3 endonuclease</fullName>
    </alternativeName>
    <alternativeName>
        <fullName evidence="1">tRNase Z</fullName>
    </alternativeName>
</protein>
<comment type="function">
    <text evidence="1">Zinc phosphodiesterase, which displays some tRNA 3'-processing endonuclease activity. Probably involved in tRNA maturation, by removing a 3'-trailer from precursor tRNA.</text>
</comment>
<comment type="catalytic activity">
    <reaction evidence="1">
        <text>Endonucleolytic cleavage of RNA, removing extra 3' nucleotides from tRNA precursor, generating 3' termini of tRNAs. A 3'-hydroxy group is left at the tRNA terminus and a 5'-phosphoryl group is left at the trailer molecule.</text>
        <dbReference type="EC" id="3.1.26.11"/>
    </reaction>
</comment>
<comment type="cofactor">
    <cofactor evidence="1">
        <name>Zn(2+)</name>
        <dbReference type="ChEBI" id="CHEBI:29105"/>
    </cofactor>
    <text evidence="1">Binds 2 Zn(2+) ions.</text>
</comment>
<comment type="subunit">
    <text evidence="1">Homodimer.</text>
</comment>
<comment type="similarity">
    <text evidence="1">Belongs to the RNase Z family.</text>
</comment>